<accession>Q4ZNA0</accession>
<keyword id="KW-0963">Cytoplasm</keyword>
<keyword id="KW-0413">Isomerase</keyword>
<keyword id="KW-0627">Porphyrin biosynthesis</keyword>
<keyword id="KW-0663">Pyridoxal phosphate</keyword>
<evidence type="ECO:0000255" key="1">
    <source>
        <dbReference type="HAMAP-Rule" id="MF_00375"/>
    </source>
</evidence>
<name>GSA_PSEU2</name>
<dbReference type="EC" id="5.4.3.8" evidence="1"/>
<dbReference type="EMBL" id="CP000075">
    <property type="protein sequence ID" value="AAY39372.1"/>
    <property type="molecule type" value="Genomic_DNA"/>
</dbReference>
<dbReference type="RefSeq" id="WP_003399812.1">
    <property type="nucleotide sequence ID" value="NC_007005.1"/>
</dbReference>
<dbReference type="RefSeq" id="YP_237410.1">
    <property type="nucleotide sequence ID" value="NC_007005.1"/>
</dbReference>
<dbReference type="SMR" id="Q4ZNA0"/>
<dbReference type="STRING" id="205918.Psyr_4342"/>
<dbReference type="KEGG" id="psb:Psyr_4342"/>
<dbReference type="PATRIC" id="fig|205918.7.peg.4481"/>
<dbReference type="eggNOG" id="COG0001">
    <property type="taxonomic scope" value="Bacteria"/>
</dbReference>
<dbReference type="HOGENOM" id="CLU_016922_1_5_6"/>
<dbReference type="OrthoDB" id="9801052at2"/>
<dbReference type="UniPathway" id="UPA00251">
    <property type="reaction ID" value="UER00317"/>
</dbReference>
<dbReference type="Proteomes" id="UP000000426">
    <property type="component" value="Chromosome"/>
</dbReference>
<dbReference type="GO" id="GO:0005737">
    <property type="term" value="C:cytoplasm"/>
    <property type="evidence" value="ECO:0007669"/>
    <property type="project" value="UniProtKB-SubCell"/>
</dbReference>
<dbReference type="GO" id="GO:0042286">
    <property type="term" value="F:glutamate-1-semialdehyde 2,1-aminomutase activity"/>
    <property type="evidence" value="ECO:0007669"/>
    <property type="project" value="UniProtKB-UniRule"/>
</dbReference>
<dbReference type="GO" id="GO:0030170">
    <property type="term" value="F:pyridoxal phosphate binding"/>
    <property type="evidence" value="ECO:0007669"/>
    <property type="project" value="InterPro"/>
</dbReference>
<dbReference type="GO" id="GO:0008483">
    <property type="term" value="F:transaminase activity"/>
    <property type="evidence" value="ECO:0007669"/>
    <property type="project" value="InterPro"/>
</dbReference>
<dbReference type="GO" id="GO:0006782">
    <property type="term" value="P:protoporphyrinogen IX biosynthetic process"/>
    <property type="evidence" value="ECO:0007669"/>
    <property type="project" value="UniProtKB-UniRule"/>
</dbReference>
<dbReference type="CDD" id="cd00610">
    <property type="entry name" value="OAT_like"/>
    <property type="match status" value="1"/>
</dbReference>
<dbReference type="FunFam" id="3.40.640.10:FF:000021">
    <property type="entry name" value="Glutamate-1-semialdehyde 2,1-aminomutase"/>
    <property type="match status" value="1"/>
</dbReference>
<dbReference type="Gene3D" id="3.90.1150.10">
    <property type="entry name" value="Aspartate Aminotransferase, domain 1"/>
    <property type="match status" value="1"/>
</dbReference>
<dbReference type="Gene3D" id="3.40.640.10">
    <property type="entry name" value="Type I PLP-dependent aspartate aminotransferase-like (Major domain)"/>
    <property type="match status" value="1"/>
</dbReference>
<dbReference type="HAMAP" id="MF_00375">
    <property type="entry name" value="HemL_aminotrans_3"/>
    <property type="match status" value="1"/>
</dbReference>
<dbReference type="InterPro" id="IPR004639">
    <property type="entry name" value="4pyrrol_synth_GluAld_NH2Trfase"/>
</dbReference>
<dbReference type="InterPro" id="IPR005814">
    <property type="entry name" value="Aminotrans_3"/>
</dbReference>
<dbReference type="InterPro" id="IPR049704">
    <property type="entry name" value="Aminotrans_3_PPA_site"/>
</dbReference>
<dbReference type="InterPro" id="IPR015424">
    <property type="entry name" value="PyrdxlP-dep_Trfase"/>
</dbReference>
<dbReference type="InterPro" id="IPR015421">
    <property type="entry name" value="PyrdxlP-dep_Trfase_major"/>
</dbReference>
<dbReference type="InterPro" id="IPR015422">
    <property type="entry name" value="PyrdxlP-dep_Trfase_small"/>
</dbReference>
<dbReference type="NCBIfam" id="TIGR00713">
    <property type="entry name" value="hemL"/>
    <property type="match status" value="1"/>
</dbReference>
<dbReference type="NCBIfam" id="NF000818">
    <property type="entry name" value="PRK00062.1"/>
    <property type="match status" value="1"/>
</dbReference>
<dbReference type="PANTHER" id="PTHR43713">
    <property type="entry name" value="GLUTAMATE-1-SEMIALDEHYDE 2,1-AMINOMUTASE"/>
    <property type="match status" value="1"/>
</dbReference>
<dbReference type="PANTHER" id="PTHR43713:SF3">
    <property type="entry name" value="GLUTAMATE-1-SEMIALDEHYDE 2,1-AMINOMUTASE 1, CHLOROPLASTIC-RELATED"/>
    <property type="match status" value="1"/>
</dbReference>
<dbReference type="Pfam" id="PF00202">
    <property type="entry name" value="Aminotran_3"/>
    <property type="match status" value="1"/>
</dbReference>
<dbReference type="SUPFAM" id="SSF53383">
    <property type="entry name" value="PLP-dependent transferases"/>
    <property type="match status" value="1"/>
</dbReference>
<dbReference type="PROSITE" id="PS00600">
    <property type="entry name" value="AA_TRANSFER_CLASS_3"/>
    <property type="match status" value="1"/>
</dbReference>
<gene>
    <name evidence="1" type="primary">hemL</name>
    <name type="ordered locus">Psyr_4342</name>
</gene>
<organism>
    <name type="scientific">Pseudomonas syringae pv. syringae (strain B728a)</name>
    <dbReference type="NCBI Taxonomy" id="205918"/>
    <lineage>
        <taxon>Bacteria</taxon>
        <taxon>Pseudomonadati</taxon>
        <taxon>Pseudomonadota</taxon>
        <taxon>Gammaproteobacteria</taxon>
        <taxon>Pseudomonadales</taxon>
        <taxon>Pseudomonadaceae</taxon>
        <taxon>Pseudomonas</taxon>
        <taxon>Pseudomonas syringae</taxon>
    </lineage>
</organism>
<protein>
    <recommendedName>
        <fullName evidence="1">Glutamate-1-semialdehyde 2,1-aminomutase</fullName>
        <shortName evidence="1">GSA</shortName>
        <ecNumber evidence="1">5.4.3.8</ecNumber>
    </recommendedName>
    <alternativeName>
        <fullName evidence="1">Glutamate-1-semialdehyde aminotransferase</fullName>
        <shortName evidence="1">GSA-AT</shortName>
    </alternativeName>
</protein>
<comment type="catalytic activity">
    <reaction evidence="1">
        <text>(S)-4-amino-5-oxopentanoate = 5-aminolevulinate</text>
        <dbReference type="Rhea" id="RHEA:14265"/>
        <dbReference type="ChEBI" id="CHEBI:57501"/>
        <dbReference type="ChEBI" id="CHEBI:356416"/>
        <dbReference type="EC" id="5.4.3.8"/>
    </reaction>
</comment>
<comment type="cofactor">
    <cofactor evidence="1">
        <name>pyridoxal 5'-phosphate</name>
        <dbReference type="ChEBI" id="CHEBI:597326"/>
    </cofactor>
</comment>
<comment type="pathway">
    <text evidence="1">Porphyrin-containing compound metabolism; protoporphyrin-IX biosynthesis; 5-aminolevulinate from L-glutamyl-tRNA(Glu): step 2/2.</text>
</comment>
<comment type="subunit">
    <text evidence="1">Homodimer.</text>
</comment>
<comment type="subcellular location">
    <subcellularLocation>
        <location evidence="1">Cytoplasm</location>
    </subcellularLocation>
</comment>
<comment type="similarity">
    <text evidence="1">Belongs to the class-III pyridoxal-phosphate-dependent aminotransferase family. HemL subfamily.</text>
</comment>
<sequence>MSRSETLFANAQKHIPGGVNSPVRAFKSVGGTPLFFKHAAGAYVTDEDDKRYVDYVGSWGPMILGHSHPDVLDAVRSQLEHGLSYGAPTAMETEMADLVCELVPSMEMVRMVSSGTEATMSAIRLARGFTGRDSILKFEGCYHGHSDSLLVKAGSGALTLGVPSSPGVPAAFAKHTLTVPFNNLDAVRDLLAEVGQEVACIIVEPVAGNMNCVPPAPGYLQGLRELCDEHGVVLIFDEVMTGFRVALGGAQAYYGVTPDLSTFGKIIGGGMPVGCFGGKREIMSHIAPLGPVYQAGTLSGNPLAMAAGLTTLRLISRPGFHDELSDYTRRLLEGLQQRADAAGIPFVTTQAGGMFGLYFSEADEIVTFEDVMTSDSERFKRFFHLMLDGGVYLAPSAFEAGFTSIAHGDAELKLTLDAAEKAFAALK</sequence>
<reference key="1">
    <citation type="journal article" date="2005" name="Proc. Natl. Acad. Sci. U.S.A.">
        <title>Comparison of the complete genome sequences of Pseudomonas syringae pv. syringae B728a and pv. tomato DC3000.</title>
        <authorList>
            <person name="Feil H."/>
            <person name="Feil W.S."/>
            <person name="Chain P."/>
            <person name="Larimer F."/>
            <person name="Dibartolo G."/>
            <person name="Copeland A."/>
            <person name="Lykidis A."/>
            <person name="Trong S."/>
            <person name="Nolan M."/>
            <person name="Goltsman E."/>
            <person name="Thiel J."/>
            <person name="Malfatti S."/>
            <person name="Loper J.E."/>
            <person name="Lapidus A."/>
            <person name="Detter J.C."/>
            <person name="Land M."/>
            <person name="Richardson P.M."/>
            <person name="Kyrpides N.C."/>
            <person name="Ivanova N."/>
            <person name="Lindow S.E."/>
        </authorList>
    </citation>
    <scope>NUCLEOTIDE SEQUENCE [LARGE SCALE GENOMIC DNA]</scope>
    <source>
        <strain>B728a</strain>
    </source>
</reference>
<feature type="chain" id="PRO_0000243606" description="Glutamate-1-semialdehyde 2,1-aminomutase">
    <location>
        <begin position="1"/>
        <end position="427"/>
    </location>
</feature>
<feature type="modified residue" description="N6-(pyridoxal phosphate)lysine" evidence="1">
    <location>
        <position position="265"/>
    </location>
</feature>
<proteinExistence type="inferred from homology"/>